<accession>Q5LHL3</accession>
<name>RSGA_BACFN</name>
<protein>
    <recommendedName>
        <fullName evidence="1">Small ribosomal subunit biogenesis GTPase RsgA</fullName>
        <ecNumber evidence="1">3.6.1.-</ecNumber>
    </recommendedName>
</protein>
<sequence>MKGLVIKNTGSWYQVKTDDGQLVECKIKGNFRLKGIRSTNPVAVGDRVQIILNQEGTAFISEIEDRKNYIIRRSSNLSKQSHILAANLDQCMLVVTVNYPETSTTFIDRFLASAEAYRVPVKILFNKVDAYDEDELHYLDSLITLYTQIGYPCFKISALTGEGVDAIREELKGRVTLFSGHSGVGKSTLINALVPGLEVKTAEISAYHNKGMHTTTFSEMFPVPGDGYIIDTPGIKGFGTFDMEEEEIGHYFPEIFKTSANCKYGNCTHRQEPGCAVRKAVEEHYISESRYTSYLSMLEDKEEGKYRAAY</sequence>
<reference key="1">
    <citation type="journal article" date="2005" name="Science">
        <title>Extensive DNA inversions in the B. fragilis genome control variable gene expression.</title>
        <authorList>
            <person name="Cerdeno-Tarraga A.-M."/>
            <person name="Patrick S."/>
            <person name="Crossman L.C."/>
            <person name="Blakely G."/>
            <person name="Abratt V."/>
            <person name="Lennard N."/>
            <person name="Poxton I."/>
            <person name="Duerden B."/>
            <person name="Harris B."/>
            <person name="Quail M.A."/>
            <person name="Barron A."/>
            <person name="Clark L."/>
            <person name="Corton C."/>
            <person name="Doggett J."/>
            <person name="Holden M.T.G."/>
            <person name="Larke N."/>
            <person name="Line A."/>
            <person name="Lord A."/>
            <person name="Norbertczak H."/>
            <person name="Ormond D."/>
            <person name="Price C."/>
            <person name="Rabbinowitsch E."/>
            <person name="Woodward J."/>
            <person name="Barrell B.G."/>
            <person name="Parkhill J."/>
        </authorList>
    </citation>
    <scope>NUCLEOTIDE SEQUENCE [LARGE SCALE GENOMIC DNA]</scope>
    <source>
        <strain>ATCC 25285 / DSM 2151 / CCUG 4856 / JCM 11019 / LMG 10263 / NCTC 9343 / Onslow / VPI 2553 / EN-2</strain>
    </source>
</reference>
<proteinExistence type="inferred from homology"/>
<dbReference type="EC" id="3.6.1.-" evidence="1"/>
<dbReference type="EMBL" id="CR626927">
    <property type="protein sequence ID" value="CAH06367.1"/>
    <property type="molecule type" value="Genomic_DNA"/>
</dbReference>
<dbReference type="RefSeq" id="WP_005796320.1">
    <property type="nucleotide sequence ID" value="NZ_UFTH01000001.1"/>
</dbReference>
<dbReference type="SMR" id="Q5LHL3"/>
<dbReference type="PaxDb" id="272559-BF9343_0588"/>
<dbReference type="GeneID" id="60367663"/>
<dbReference type="KEGG" id="bfs:BF9343_0588"/>
<dbReference type="eggNOG" id="COG1162">
    <property type="taxonomic scope" value="Bacteria"/>
</dbReference>
<dbReference type="HOGENOM" id="CLU_033617_2_0_10"/>
<dbReference type="Proteomes" id="UP000006731">
    <property type="component" value="Chromosome"/>
</dbReference>
<dbReference type="GO" id="GO:0005737">
    <property type="term" value="C:cytoplasm"/>
    <property type="evidence" value="ECO:0007669"/>
    <property type="project" value="UniProtKB-SubCell"/>
</dbReference>
<dbReference type="GO" id="GO:0005525">
    <property type="term" value="F:GTP binding"/>
    <property type="evidence" value="ECO:0007669"/>
    <property type="project" value="UniProtKB-UniRule"/>
</dbReference>
<dbReference type="GO" id="GO:0003924">
    <property type="term" value="F:GTPase activity"/>
    <property type="evidence" value="ECO:0007669"/>
    <property type="project" value="UniProtKB-UniRule"/>
</dbReference>
<dbReference type="GO" id="GO:0046872">
    <property type="term" value="F:metal ion binding"/>
    <property type="evidence" value="ECO:0007669"/>
    <property type="project" value="UniProtKB-KW"/>
</dbReference>
<dbReference type="GO" id="GO:0019843">
    <property type="term" value="F:rRNA binding"/>
    <property type="evidence" value="ECO:0007669"/>
    <property type="project" value="UniProtKB-KW"/>
</dbReference>
<dbReference type="GO" id="GO:0042274">
    <property type="term" value="P:ribosomal small subunit biogenesis"/>
    <property type="evidence" value="ECO:0007669"/>
    <property type="project" value="UniProtKB-UniRule"/>
</dbReference>
<dbReference type="CDD" id="cd04466">
    <property type="entry name" value="S1_YloQ_GTPase"/>
    <property type="match status" value="1"/>
</dbReference>
<dbReference type="CDD" id="cd01854">
    <property type="entry name" value="YjeQ_EngC"/>
    <property type="match status" value="1"/>
</dbReference>
<dbReference type="Gene3D" id="2.40.50.140">
    <property type="entry name" value="Nucleic acid-binding proteins"/>
    <property type="match status" value="1"/>
</dbReference>
<dbReference type="Gene3D" id="3.40.50.300">
    <property type="entry name" value="P-loop containing nucleotide triphosphate hydrolases"/>
    <property type="match status" value="1"/>
</dbReference>
<dbReference type="Gene3D" id="1.10.40.50">
    <property type="entry name" value="Probable gtpase engc, domain 3"/>
    <property type="match status" value="1"/>
</dbReference>
<dbReference type="HAMAP" id="MF_01820">
    <property type="entry name" value="GTPase_RsgA"/>
    <property type="match status" value="1"/>
</dbReference>
<dbReference type="InterPro" id="IPR030378">
    <property type="entry name" value="G_CP_dom"/>
</dbReference>
<dbReference type="InterPro" id="IPR012340">
    <property type="entry name" value="NA-bd_OB-fold"/>
</dbReference>
<dbReference type="InterPro" id="IPR027417">
    <property type="entry name" value="P-loop_NTPase"/>
</dbReference>
<dbReference type="InterPro" id="IPR004881">
    <property type="entry name" value="Ribosome_biogen_GTPase_RsgA"/>
</dbReference>
<dbReference type="InterPro" id="IPR010914">
    <property type="entry name" value="RsgA_GTPase_dom"/>
</dbReference>
<dbReference type="InterPro" id="IPR031944">
    <property type="entry name" value="RsgA_N"/>
</dbReference>
<dbReference type="NCBIfam" id="TIGR00157">
    <property type="entry name" value="ribosome small subunit-dependent GTPase A"/>
    <property type="match status" value="1"/>
</dbReference>
<dbReference type="PANTHER" id="PTHR32120">
    <property type="entry name" value="SMALL RIBOSOMAL SUBUNIT BIOGENESIS GTPASE RSGA"/>
    <property type="match status" value="1"/>
</dbReference>
<dbReference type="PANTHER" id="PTHR32120:SF11">
    <property type="entry name" value="SMALL RIBOSOMAL SUBUNIT BIOGENESIS GTPASE RSGA 1, MITOCHONDRIAL-RELATED"/>
    <property type="match status" value="1"/>
</dbReference>
<dbReference type="Pfam" id="PF03193">
    <property type="entry name" value="RsgA_GTPase"/>
    <property type="match status" value="1"/>
</dbReference>
<dbReference type="Pfam" id="PF16745">
    <property type="entry name" value="RsgA_N"/>
    <property type="match status" value="1"/>
</dbReference>
<dbReference type="SUPFAM" id="SSF50249">
    <property type="entry name" value="Nucleic acid-binding proteins"/>
    <property type="match status" value="1"/>
</dbReference>
<dbReference type="SUPFAM" id="SSF52540">
    <property type="entry name" value="P-loop containing nucleoside triphosphate hydrolases"/>
    <property type="match status" value="1"/>
</dbReference>
<dbReference type="PROSITE" id="PS50936">
    <property type="entry name" value="ENGC_GTPASE"/>
    <property type="match status" value="1"/>
</dbReference>
<dbReference type="PROSITE" id="PS51721">
    <property type="entry name" value="G_CP"/>
    <property type="match status" value="1"/>
</dbReference>
<gene>
    <name evidence="1" type="primary">rsgA</name>
    <name type="ordered locus">BF0618</name>
</gene>
<evidence type="ECO:0000255" key="1">
    <source>
        <dbReference type="HAMAP-Rule" id="MF_01820"/>
    </source>
</evidence>
<evidence type="ECO:0000255" key="2">
    <source>
        <dbReference type="PROSITE-ProRule" id="PRU01058"/>
    </source>
</evidence>
<comment type="function">
    <text evidence="1">One of several proteins that assist in the late maturation steps of the functional core of the 30S ribosomal subunit. Helps release RbfA from mature subunits. May play a role in the assembly of ribosomal proteins into the subunit. Circularly permuted GTPase that catalyzes slow GTP hydrolysis, GTPase activity is stimulated by the 30S ribosomal subunit.</text>
</comment>
<comment type="cofactor">
    <cofactor evidence="1">
        <name>Zn(2+)</name>
        <dbReference type="ChEBI" id="CHEBI:29105"/>
    </cofactor>
    <text evidence="1">Binds 1 zinc ion per subunit.</text>
</comment>
<comment type="subunit">
    <text evidence="1">Monomer. Associates with 30S ribosomal subunit, binds 16S rRNA.</text>
</comment>
<comment type="subcellular location">
    <subcellularLocation>
        <location evidence="1">Cytoplasm</location>
    </subcellularLocation>
</comment>
<comment type="similarity">
    <text evidence="1">Belongs to the TRAFAC class YlqF/YawG GTPase family. RsgA subfamily.</text>
</comment>
<feature type="chain" id="PRO_1000188031" description="Small ribosomal subunit biogenesis GTPase RsgA">
    <location>
        <begin position="1"/>
        <end position="310"/>
    </location>
</feature>
<feature type="domain" description="CP-type G" evidence="2">
    <location>
        <begin position="77"/>
        <end position="238"/>
    </location>
</feature>
<feature type="binding site" evidence="1">
    <location>
        <begin position="126"/>
        <end position="129"/>
    </location>
    <ligand>
        <name>GTP</name>
        <dbReference type="ChEBI" id="CHEBI:37565"/>
    </ligand>
</feature>
<feature type="binding site" evidence="1">
    <location>
        <begin position="180"/>
        <end position="188"/>
    </location>
    <ligand>
        <name>GTP</name>
        <dbReference type="ChEBI" id="CHEBI:37565"/>
    </ligand>
</feature>
<feature type="binding site" evidence="1">
    <location>
        <position position="262"/>
    </location>
    <ligand>
        <name>Zn(2+)</name>
        <dbReference type="ChEBI" id="CHEBI:29105"/>
    </ligand>
</feature>
<feature type="binding site" evidence="1">
    <location>
        <position position="267"/>
    </location>
    <ligand>
        <name>Zn(2+)</name>
        <dbReference type="ChEBI" id="CHEBI:29105"/>
    </ligand>
</feature>
<feature type="binding site" evidence="1">
    <location>
        <position position="269"/>
    </location>
    <ligand>
        <name>Zn(2+)</name>
        <dbReference type="ChEBI" id="CHEBI:29105"/>
    </ligand>
</feature>
<feature type="binding site" evidence="1">
    <location>
        <position position="275"/>
    </location>
    <ligand>
        <name>Zn(2+)</name>
        <dbReference type="ChEBI" id="CHEBI:29105"/>
    </ligand>
</feature>
<organism>
    <name type="scientific">Bacteroides fragilis (strain ATCC 25285 / DSM 2151 / CCUG 4856 / JCM 11019 / LMG 10263 / NCTC 9343 / Onslow / VPI 2553 / EN-2)</name>
    <dbReference type="NCBI Taxonomy" id="272559"/>
    <lineage>
        <taxon>Bacteria</taxon>
        <taxon>Pseudomonadati</taxon>
        <taxon>Bacteroidota</taxon>
        <taxon>Bacteroidia</taxon>
        <taxon>Bacteroidales</taxon>
        <taxon>Bacteroidaceae</taxon>
        <taxon>Bacteroides</taxon>
    </lineage>
</organism>
<keyword id="KW-0963">Cytoplasm</keyword>
<keyword id="KW-0342">GTP-binding</keyword>
<keyword id="KW-0378">Hydrolase</keyword>
<keyword id="KW-0479">Metal-binding</keyword>
<keyword id="KW-0547">Nucleotide-binding</keyword>
<keyword id="KW-0690">Ribosome biogenesis</keyword>
<keyword id="KW-0694">RNA-binding</keyword>
<keyword id="KW-0699">rRNA-binding</keyword>
<keyword id="KW-0862">Zinc</keyword>